<feature type="chain" id="PRO_1000080073" description="Large ribosomal subunit protein bL20">
    <location>
        <begin position="1"/>
        <end position="118"/>
    </location>
</feature>
<sequence length="118" mass="13305">MSRVKRGVTARARHKKVLKQAKGYYGARSRVYRVAKQAVIKAGQYAYRDRKVKKRTFRSLWIVRINAAARQHDISYSQLINGLNKAGVELDRKALAELAVYNKDAFAAVVEKAKAALA</sequence>
<reference key="1">
    <citation type="submission" date="2007-12" db="EMBL/GenBank/DDBJ databases">
        <title>Complete sequence of chromosome of Francisella philomiragia subsp. philomiragia ATCC 25017.</title>
        <authorList>
            <consortium name="US DOE Joint Genome Institute"/>
            <person name="Copeland A."/>
            <person name="Lucas S."/>
            <person name="Lapidus A."/>
            <person name="Barry K."/>
            <person name="Detter J.C."/>
            <person name="Glavina del Rio T."/>
            <person name="Hammon N."/>
            <person name="Israni S."/>
            <person name="Dalin E."/>
            <person name="Tice H."/>
            <person name="Pitluck S."/>
            <person name="Chain P."/>
            <person name="Malfatti S."/>
            <person name="Shin M."/>
            <person name="Vergez L."/>
            <person name="Schmutz J."/>
            <person name="Larimer F."/>
            <person name="Land M."/>
            <person name="Hauser L."/>
            <person name="Richardson P."/>
        </authorList>
    </citation>
    <scope>NUCLEOTIDE SEQUENCE [LARGE SCALE GENOMIC DNA]</scope>
    <source>
        <strain>ATCC 25017 / CCUG 19701 / FSC 153 / O#319-036</strain>
    </source>
</reference>
<keyword id="KW-0687">Ribonucleoprotein</keyword>
<keyword id="KW-0689">Ribosomal protein</keyword>
<keyword id="KW-0694">RNA-binding</keyword>
<keyword id="KW-0699">rRNA-binding</keyword>
<gene>
    <name evidence="1" type="primary">rplT</name>
    <name type="ordered locus">Fphi_0107</name>
</gene>
<evidence type="ECO:0000255" key="1">
    <source>
        <dbReference type="HAMAP-Rule" id="MF_00382"/>
    </source>
</evidence>
<evidence type="ECO:0000305" key="2"/>
<organism>
    <name type="scientific">Francisella philomiragia subsp. philomiragia (strain ATCC 25017 / CCUG 19701 / FSC 153 / O#319-036)</name>
    <dbReference type="NCBI Taxonomy" id="484022"/>
    <lineage>
        <taxon>Bacteria</taxon>
        <taxon>Pseudomonadati</taxon>
        <taxon>Pseudomonadota</taxon>
        <taxon>Gammaproteobacteria</taxon>
        <taxon>Thiotrichales</taxon>
        <taxon>Francisellaceae</taxon>
        <taxon>Francisella</taxon>
    </lineage>
</organism>
<proteinExistence type="inferred from homology"/>
<accession>B0TY86</accession>
<comment type="function">
    <text evidence="1">Binds directly to 23S ribosomal RNA and is necessary for the in vitro assembly process of the 50S ribosomal subunit. It is not involved in the protein synthesizing functions of that subunit.</text>
</comment>
<comment type="similarity">
    <text evidence="1">Belongs to the bacterial ribosomal protein bL20 family.</text>
</comment>
<dbReference type="EMBL" id="CP000937">
    <property type="protein sequence ID" value="ABZ86328.1"/>
    <property type="molecule type" value="Genomic_DNA"/>
</dbReference>
<dbReference type="SMR" id="B0TY86"/>
<dbReference type="KEGG" id="fph:Fphi_0107"/>
<dbReference type="eggNOG" id="COG0292">
    <property type="taxonomic scope" value="Bacteria"/>
</dbReference>
<dbReference type="HOGENOM" id="CLU_123265_0_1_6"/>
<dbReference type="GO" id="GO:1990904">
    <property type="term" value="C:ribonucleoprotein complex"/>
    <property type="evidence" value="ECO:0007669"/>
    <property type="project" value="UniProtKB-KW"/>
</dbReference>
<dbReference type="GO" id="GO:0005840">
    <property type="term" value="C:ribosome"/>
    <property type="evidence" value="ECO:0007669"/>
    <property type="project" value="UniProtKB-KW"/>
</dbReference>
<dbReference type="GO" id="GO:0019843">
    <property type="term" value="F:rRNA binding"/>
    <property type="evidence" value="ECO:0007669"/>
    <property type="project" value="UniProtKB-UniRule"/>
</dbReference>
<dbReference type="GO" id="GO:0003735">
    <property type="term" value="F:structural constituent of ribosome"/>
    <property type="evidence" value="ECO:0007669"/>
    <property type="project" value="InterPro"/>
</dbReference>
<dbReference type="GO" id="GO:0000027">
    <property type="term" value="P:ribosomal large subunit assembly"/>
    <property type="evidence" value="ECO:0007669"/>
    <property type="project" value="UniProtKB-UniRule"/>
</dbReference>
<dbReference type="GO" id="GO:0006412">
    <property type="term" value="P:translation"/>
    <property type="evidence" value="ECO:0007669"/>
    <property type="project" value="InterPro"/>
</dbReference>
<dbReference type="CDD" id="cd07026">
    <property type="entry name" value="Ribosomal_L20"/>
    <property type="match status" value="1"/>
</dbReference>
<dbReference type="FunFam" id="1.10.1900.20:FF:000001">
    <property type="entry name" value="50S ribosomal protein L20"/>
    <property type="match status" value="1"/>
</dbReference>
<dbReference type="Gene3D" id="6.10.160.10">
    <property type="match status" value="1"/>
</dbReference>
<dbReference type="Gene3D" id="1.10.1900.20">
    <property type="entry name" value="Ribosomal protein L20"/>
    <property type="match status" value="1"/>
</dbReference>
<dbReference type="HAMAP" id="MF_00382">
    <property type="entry name" value="Ribosomal_bL20"/>
    <property type="match status" value="1"/>
</dbReference>
<dbReference type="InterPro" id="IPR005813">
    <property type="entry name" value="Ribosomal_bL20"/>
</dbReference>
<dbReference type="InterPro" id="IPR049946">
    <property type="entry name" value="RIBOSOMAL_L20_CS"/>
</dbReference>
<dbReference type="InterPro" id="IPR035566">
    <property type="entry name" value="Ribosomal_protein_bL20_C"/>
</dbReference>
<dbReference type="NCBIfam" id="TIGR01032">
    <property type="entry name" value="rplT_bact"/>
    <property type="match status" value="1"/>
</dbReference>
<dbReference type="PANTHER" id="PTHR10986">
    <property type="entry name" value="39S RIBOSOMAL PROTEIN L20"/>
    <property type="match status" value="1"/>
</dbReference>
<dbReference type="Pfam" id="PF00453">
    <property type="entry name" value="Ribosomal_L20"/>
    <property type="match status" value="1"/>
</dbReference>
<dbReference type="PRINTS" id="PR00062">
    <property type="entry name" value="RIBOSOMALL20"/>
</dbReference>
<dbReference type="SUPFAM" id="SSF74731">
    <property type="entry name" value="Ribosomal protein L20"/>
    <property type="match status" value="1"/>
</dbReference>
<dbReference type="PROSITE" id="PS00937">
    <property type="entry name" value="RIBOSOMAL_L20"/>
    <property type="match status" value="1"/>
</dbReference>
<name>RL20_FRAP2</name>
<protein>
    <recommendedName>
        <fullName evidence="1">Large ribosomal subunit protein bL20</fullName>
    </recommendedName>
    <alternativeName>
        <fullName evidence="2">50S ribosomal protein L20</fullName>
    </alternativeName>
</protein>